<gene>
    <name evidence="1" type="primary">nuoB1</name>
    <name type="ordered locus">sce0523</name>
</gene>
<dbReference type="EC" id="7.1.1.-" evidence="1"/>
<dbReference type="EMBL" id="AM746676">
    <property type="protein sequence ID" value="CAN90680.1"/>
    <property type="molecule type" value="Genomic_DNA"/>
</dbReference>
<dbReference type="SMR" id="A9GUX6"/>
<dbReference type="STRING" id="448385.sce0523"/>
<dbReference type="KEGG" id="scl:sce0523"/>
<dbReference type="eggNOG" id="COG0377">
    <property type="taxonomic scope" value="Bacteria"/>
</dbReference>
<dbReference type="HOGENOM" id="CLU_055737_7_3_7"/>
<dbReference type="OrthoDB" id="9786737at2"/>
<dbReference type="Proteomes" id="UP000002139">
    <property type="component" value="Chromosome"/>
</dbReference>
<dbReference type="GO" id="GO:0005886">
    <property type="term" value="C:plasma membrane"/>
    <property type="evidence" value="ECO:0007669"/>
    <property type="project" value="UniProtKB-SubCell"/>
</dbReference>
<dbReference type="GO" id="GO:0045271">
    <property type="term" value="C:respiratory chain complex I"/>
    <property type="evidence" value="ECO:0007669"/>
    <property type="project" value="TreeGrafter"/>
</dbReference>
<dbReference type="GO" id="GO:0051539">
    <property type="term" value="F:4 iron, 4 sulfur cluster binding"/>
    <property type="evidence" value="ECO:0007669"/>
    <property type="project" value="UniProtKB-KW"/>
</dbReference>
<dbReference type="GO" id="GO:0005506">
    <property type="term" value="F:iron ion binding"/>
    <property type="evidence" value="ECO:0007669"/>
    <property type="project" value="UniProtKB-UniRule"/>
</dbReference>
<dbReference type="GO" id="GO:0008137">
    <property type="term" value="F:NADH dehydrogenase (ubiquinone) activity"/>
    <property type="evidence" value="ECO:0007669"/>
    <property type="project" value="InterPro"/>
</dbReference>
<dbReference type="GO" id="GO:0050136">
    <property type="term" value="F:NADH:ubiquinone reductase (non-electrogenic) activity"/>
    <property type="evidence" value="ECO:0007669"/>
    <property type="project" value="UniProtKB-UniRule"/>
</dbReference>
<dbReference type="GO" id="GO:0048038">
    <property type="term" value="F:quinone binding"/>
    <property type="evidence" value="ECO:0007669"/>
    <property type="project" value="UniProtKB-KW"/>
</dbReference>
<dbReference type="GO" id="GO:0009060">
    <property type="term" value="P:aerobic respiration"/>
    <property type="evidence" value="ECO:0007669"/>
    <property type="project" value="TreeGrafter"/>
</dbReference>
<dbReference type="GO" id="GO:0015990">
    <property type="term" value="P:electron transport coupled proton transport"/>
    <property type="evidence" value="ECO:0007669"/>
    <property type="project" value="TreeGrafter"/>
</dbReference>
<dbReference type="FunFam" id="3.40.50.12280:FF:000002">
    <property type="entry name" value="NADH-quinone oxidoreductase subunit B"/>
    <property type="match status" value="1"/>
</dbReference>
<dbReference type="Gene3D" id="3.40.50.12280">
    <property type="match status" value="1"/>
</dbReference>
<dbReference type="HAMAP" id="MF_01356">
    <property type="entry name" value="NDH1_NuoB"/>
    <property type="match status" value="1"/>
</dbReference>
<dbReference type="InterPro" id="IPR006137">
    <property type="entry name" value="NADH_UbQ_OxRdtase-like_20kDa"/>
</dbReference>
<dbReference type="InterPro" id="IPR006138">
    <property type="entry name" value="NADH_UQ_OxRdtase_20Kd_su"/>
</dbReference>
<dbReference type="NCBIfam" id="TIGR01957">
    <property type="entry name" value="nuoB_fam"/>
    <property type="match status" value="1"/>
</dbReference>
<dbReference type="NCBIfam" id="NF005012">
    <property type="entry name" value="PRK06411.1"/>
    <property type="match status" value="1"/>
</dbReference>
<dbReference type="PANTHER" id="PTHR11995">
    <property type="entry name" value="NADH DEHYDROGENASE"/>
    <property type="match status" value="1"/>
</dbReference>
<dbReference type="PANTHER" id="PTHR11995:SF14">
    <property type="entry name" value="NADH DEHYDROGENASE [UBIQUINONE] IRON-SULFUR PROTEIN 7, MITOCHONDRIAL"/>
    <property type="match status" value="1"/>
</dbReference>
<dbReference type="Pfam" id="PF01058">
    <property type="entry name" value="Oxidored_q6"/>
    <property type="match status" value="1"/>
</dbReference>
<dbReference type="SUPFAM" id="SSF56770">
    <property type="entry name" value="HydA/Nqo6-like"/>
    <property type="match status" value="1"/>
</dbReference>
<organism>
    <name type="scientific">Sorangium cellulosum (strain So ce56)</name>
    <name type="common">Polyangium cellulosum (strain So ce56)</name>
    <dbReference type="NCBI Taxonomy" id="448385"/>
    <lineage>
        <taxon>Bacteria</taxon>
        <taxon>Pseudomonadati</taxon>
        <taxon>Myxococcota</taxon>
        <taxon>Polyangia</taxon>
        <taxon>Polyangiales</taxon>
        <taxon>Polyangiaceae</taxon>
        <taxon>Sorangium</taxon>
    </lineage>
</organism>
<accession>A9GUX6</accession>
<sequence>MGEVKAGGPSTRVMEGSEHGFATTRVDALLNWAKKYSLFQYPFVTACCGMEYMAMASPRFDMARFGAEVPRFSPRQADLLWVVGTISQRQAPALKRIYEQMADPKWVLAFGTCASCGGFYDNYTTVAGIDKVIPCDVYVPGCPPRPEAVLDGLMLLQDKIARGDRTPAIVKPREDPAQTTEHLVTLQRKERSLP</sequence>
<proteinExistence type="inferred from homology"/>
<name>NUOB1_SORC5</name>
<protein>
    <recommendedName>
        <fullName evidence="1">NADH-quinone oxidoreductase subunit B 1</fullName>
        <ecNumber evidence="1">7.1.1.-</ecNumber>
    </recommendedName>
    <alternativeName>
        <fullName evidence="1">NADH dehydrogenase I subunit B 1</fullName>
    </alternativeName>
    <alternativeName>
        <fullName evidence="1">NDH-1 subunit B 1</fullName>
    </alternativeName>
</protein>
<evidence type="ECO:0000255" key="1">
    <source>
        <dbReference type="HAMAP-Rule" id="MF_01356"/>
    </source>
</evidence>
<feature type="chain" id="PRO_0000376383" description="NADH-quinone oxidoreductase subunit B 1">
    <location>
        <begin position="1"/>
        <end position="194"/>
    </location>
</feature>
<feature type="binding site" evidence="1">
    <location>
        <position position="47"/>
    </location>
    <ligand>
        <name>[4Fe-4S] cluster</name>
        <dbReference type="ChEBI" id="CHEBI:49883"/>
    </ligand>
</feature>
<feature type="binding site" evidence="1">
    <location>
        <position position="48"/>
    </location>
    <ligand>
        <name>[4Fe-4S] cluster</name>
        <dbReference type="ChEBI" id="CHEBI:49883"/>
    </ligand>
</feature>
<feature type="binding site" evidence="1">
    <location>
        <position position="113"/>
    </location>
    <ligand>
        <name>[4Fe-4S] cluster</name>
        <dbReference type="ChEBI" id="CHEBI:49883"/>
    </ligand>
</feature>
<feature type="binding site" evidence="1">
    <location>
        <position position="142"/>
    </location>
    <ligand>
        <name>[4Fe-4S] cluster</name>
        <dbReference type="ChEBI" id="CHEBI:49883"/>
    </ligand>
</feature>
<comment type="function">
    <text evidence="1">NDH-1 shuttles electrons from NADH, via FMN and iron-sulfur (Fe-S) centers, to quinones in the respiratory chain. The immediate electron acceptor for the enzyme in this species is believed to be ubiquinone. Couples the redox reaction to proton translocation (for every two electrons transferred, four hydrogen ions are translocated across the cytoplasmic membrane), and thus conserves the redox energy in a proton gradient.</text>
</comment>
<comment type="catalytic activity">
    <reaction evidence="1">
        <text>a quinone + NADH + 5 H(+)(in) = a quinol + NAD(+) + 4 H(+)(out)</text>
        <dbReference type="Rhea" id="RHEA:57888"/>
        <dbReference type="ChEBI" id="CHEBI:15378"/>
        <dbReference type="ChEBI" id="CHEBI:24646"/>
        <dbReference type="ChEBI" id="CHEBI:57540"/>
        <dbReference type="ChEBI" id="CHEBI:57945"/>
        <dbReference type="ChEBI" id="CHEBI:132124"/>
    </reaction>
</comment>
<comment type="cofactor">
    <cofactor evidence="1">
        <name>[4Fe-4S] cluster</name>
        <dbReference type="ChEBI" id="CHEBI:49883"/>
    </cofactor>
    <text evidence="1">Binds 1 [4Fe-4S] cluster.</text>
</comment>
<comment type="subunit">
    <text evidence="1">NDH-1 is composed of 14 different subunits. Subunits NuoB, C, D, E, F, and G constitute the peripheral sector of the complex.</text>
</comment>
<comment type="subcellular location">
    <subcellularLocation>
        <location evidence="1">Cell inner membrane</location>
        <topology evidence="1">Peripheral membrane protein</topology>
        <orientation evidence="1">Cytoplasmic side</orientation>
    </subcellularLocation>
</comment>
<comment type="similarity">
    <text evidence="1">Belongs to the complex I 20 kDa subunit family.</text>
</comment>
<reference key="1">
    <citation type="journal article" date="2007" name="Nat. Biotechnol.">
        <title>Complete genome sequence of the myxobacterium Sorangium cellulosum.</title>
        <authorList>
            <person name="Schneiker S."/>
            <person name="Perlova O."/>
            <person name="Kaiser O."/>
            <person name="Gerth K."/>
            <person name="Alici A."/>
            <person name="Altmeyer M.O."/>
            <person name="Bartels D."/>
            <person name="Bekel T."/>
            <person name="Beyer S."/>
            <person name="Bode E."/>
            <person name="Bode H.B."/>
            <person name="Bolten C.J."/>
            <person name="Choudhuri J.V."/>
            <person name="Doss S."/>
            <person name="Elnakady Y.A."/>
            <person name="Frank B."/>
            <person name="Gaigalat L."/>
            <person name="Goesmann A."/>
            <person name="Groeger C."/>
            <person name="Gross F."/>
            <person name="Jelsbak L."/>
            <person name="Jelsbak L."/>
            <person name="Kalinowski J."/>
            <person name="Kegler C."/>
            <person name="Knauber T."/>
            <person name="Konietzny S."/>
            <person name="Kopp M."/>
            <person name="Krause L."/>
            <person name="Krug D."/>
            <person name="Linke B."/>
            <person name="Mahmud T."/>
            <person name="Martinez-Arias R."/>
            <person name="McHardy A.C."/>
            <person name="Merai M."/>
            <person name="Meyer F."/>
            <person name="Mormann S."/>
            <person name="Munoz-Dorado J."/>
            <person name="Perez J."/>
            <person name="Pradella S."/>
            <person name="Rachid S."/>
            <person name="Raddatz G."/>
            <person name="Rosenau F."/>
            <person name="Rueckert C."/>
            <person name="Sasse F."/>
            <person name="Scharfe M."/>
            <person name="Schuster S.C."/>
            <person name="Suen G."/>
            <person name="Treuner-Lange A."/>
            <person name="Velicer G.J."/>
            <person name="Vorholter F.-J."/>
            <person name="Weissman K.J."/>
            <person name="Welch R.D."/>
            <person name="Wenzel S.C."/>
            <person name="Whitworth D.E."/>
            <person name="Wilhelm S."/>
            <person name="Wittmann C."/>
            <person name="Bloecker H."/>
            <person name="Puehler A."/>
            <person name="Mueller R."/>
        </authorList>
    </citation>
    <scope>NUCLEOTIDE SEQUENCE [LARGE SCALE GENOMIC DNA]</scope>
    <source>
        <strain>So ce56</strain>
    </source>
</reference>
<keyword id="KW-0004">4Fe-4S</keyword>
<keyword id="KW-0997">Cell inner membrane</keyword>
<keyword id="KW-1003">Cell membrane</keyword>
<keyword id="KW-0408">Iron</keyword>
<keyword id="KW-0411">Iron-sulfur</keyword>
<keyword id="KW-0472">Membrane</keyword>
<keyword id="KW-0479">Metal-binding</keyword>
<keyword id="KW-0520">NAD</keyword>
<keyword id="KW-0874">Quinone</keyword>
<keyword id="KW-1185">Reference proteome</keyword>
<keyword id="KW-1278">Translocase</keyword>
<keyword id="KW-0813">Transport</keyword>
<keyword id="KW-0830">Ubiquinone</keyword>